<gene>
    <name type="primary">NDUFB1</name>
</gene>
<keyword id="KW-0002">3D-structure</keyword>
<keyword id="KW-0903">Direct protein sequencing</keyword>
<keyword id="KW-0249">Electron transport</keyword>
<keyword id="KW-0472">Membrane</keyword>
<keyword id="KW-0496">Mitochondrion</keyword>
<keyword id="KW-0999">Mitochondrion inner membrane</keyword>
<keyword id="KW-1185">Reference proteome</keyword>
<keyword id="KW-0679">Respiratory chain</keyword>
<keyword id="KW-0812">Transmembrane</keyword>
<keyword id="KW-1133">Transmembrane helix</keyword>
<keyword id="KW-0813">Transport</keyword>
<feature type="chain" id="PRO_0000118826" description="NADH dehydrogenase [ubiquinone] 1 beta subcomplex subunit 1">
    <location>
        <begin position="1"/>
        <end position="57"/>
    </location>
</feature>
<feature type="transmembrane region" description="Helical" evidence="2">
    <location>
        <begin position="10"/>
        <end position="26"/>
    </location>
</feature>
<feature type="helix" evidence="12">
    <location>
        <begin position="3"/>
        <end position="5"/>
    </location>
</feature>
<feature type="helix" evidence="10">
    <location>
        <begin position="6"/>
        <end position="10"/>
    </location>
</feature>
<feature type="helix" evidence="10">
    <location>
        <begin position="11"/>
        <end position="14"/>
    </location>
</feature>
<feature type="helix" evidence="10">
    <location>
        <begin position="15"/>
        <end position="31"/>
    </location>
</feature>
<feature type="helix" evidence="9">
    <location>
        <begin position="32"/>
        <end position="34"/>
    </location>
</feature>
<feature type="turn" evidence="10">
    <location>
        <begin position="36"/>
        <end position="40"/>
    </location>
</feature>
<feature type="turn" evidence="10">
    <location>
        <begin position="42"/>
        <end position="44"/>
    </location>
</feature>
<feature type="strand" evidence="11">
    <location>
        <begin position="53"/>
        <end position="55"/>
    </location>
</feature>
<sequence>MNLLQVVRDHWVHVLVPMGFVFGYYLDRKNDEKLTAFRNKSLLYKRELKPNEEVTWK</sequence>
<comment type="function">
    <text evidence="1">Accessory subunit of the mitochondrial membrane respiratory chain NADH dehydrogenase (Complex I) that is believed not to be involved in catalysis. Complex I functions in the transfer of electrons from NADH to the respiratory chain. The immediate electron acceptor for the enzyme is believed to be ubiquinone.</text>
</comment>
<comment type="subunit">
    <text evidence="3 4 5">Complex I is composed of 45 different subunits.</text>
</comment>
<comment type="subcellular location">
    <subcellularLocation>
        <location evidence="7 8">Mitochondrion inner membrane</location>
        <topology evidence="2">Single-pass membrane protein</topology>
        <orientation evidence="6">Matrix side</orientation>
    </subcellularLocation>
</comment>
<comment type="similarity">
    <text evidence="6">Belongs to the complex I NDUFB1 subunit family.</text>
</comment>
<comment type="sequence caution" evidence="6">
    <conflict type="erroneous initiation">
        <sequence resource="EMBL-CDS" id="CAA44908"/>
    </conflict>
</comment>
<dbReference type="EMBL" id="X63223">
    <property type="protein sequence ID" value="CAA44908.1"/>
    <property type="status" value="ALT_INIT"/>
    <property type="molecule type" value="mRNA"/>
</dbReference>
<dbReference type="PIR" id="S28251">
    <property type="entry name" value="S28251"/>
</dbReference>
<dbReference type="RefSeq" id="NP_787003.1">
    <property type="nucleotide sequence ID" value="NM_175809.2"/>
</dbReference>
<dbReference type="PDB" id="5LC5">
    <property type="method" value="EM"/>
    <property type="resolution" value="4.35 A"/>
    <property type="chains" value="f=1-57"/>
</dbReference>
<dbReference type="PDB" id="5LDW">
    <property type="method" value="EM"/>
    <property type="resolution" value="4.27 A"/>
    <property type="chains" value="f=1-57"/>
</dbReference>
<dbReference type="PDB" id="5LDX">
    <property type="method" value="EM"/>
    <property type="resolution" value="5.60 A"/>
    <property type="chains" value="f=1-57"/>
</dbReference>
<dbReference type="PDB" id="5O31">
    <property type="method" value="EM"/>
    <property type="resolution" value="4.13 A"/>
    <property type="chains" value="f=1-57"/>
</dbReference>
<dbReference type="PDB" id="7DGQ">
    <property type="method" value="EM"/>
    <property type="resolution" value="5.00 A"/>
    <property type="chains" value="X=1-57"/>
</dbReference>
<dbReference type="PDB" id="7DGR">
    <property type="method" value="EM"/>
    <property type="resolution" value="4.60 A"/>
    <property type="chains" value="X=1-57"/>
</dbReference>
<dbReference type="PDB" id="7DGS">
    <property type="method" value="EM"/>
    <property type="resolution" value="7.80 A"/>
    <property type="chains" value="X=1-57"/>
</dbReference>
<dbReference type="PDB" id="7DGZ">
    <property type="method" value="EM"/>
    <property type="resolution" value="3.80 A"/>
    <property type="chains" value="X=1-57"/>
</dbReference>
<dbReference type="PDB" id="7DH0">
    <property type="method" value="EM"/>
    <property type="resolution" value="4.20 A"/>
    <property type="chains" value="X=1-57"/>
</dbReference>
<dbReference type="PDB" id="7DKF">
    <property type="method" value="EM"/>
    <property type="resolution" value="8.30 A"/>
    <property type="chains" value="X2=1-57"/>
</dbReference>
<dbReference type="PDB" id="7QSD">
    <property type="method" value="EM"/>
    <property type="resolution" value="3.10 A"/>
    <property type="chains" value="f=1-57"/>
</dbReference>
<dbReference type="PDB" id="7QSK">
    <property type="method" value="EM"/>
    <property type="resolution" value="2.84 A"/>
    <property type="chains" value="f=1-57"/>
</dbReference>
<dbReference type="PDB" id="7QSL">
    <property type="method" value="EM"/>
    <property type="resolution" value="2.76 A"/>
    <property type="chains" value="f=1-57"/>
</dbReference>
<dbReference type="PDB" id="7QSM">
    <property type="method" value="EM"/>
    <property type="resolution" value="2.30 A"/>
    <property type="chains" value="f=1-57"/>
</dbReference>
<dbReference type="PDB" id="7QSN">
    <property type="method" value="EM"/>
    <property type="resolution" value="2.81 A"/>
    <property type="chains" value="f=1-57"/>
</dbReference>
<dbReference type="PDB" id="7QSO">
    <property type="method" value="EM"/>
    <property type="resolution" value="3.02 A"/>
    <property type="chains" value="f=1-57"/>
</dbReference>
<dbReference type="PDB" id="7R41">
    <property type="method" value="EM"/>
    <property type="resolution" value="2.30 A"/>
    <property type="chains" value="f=1-57"/>
</dbReference>
<dbReference type="PDB" id="7R42">
    <property type="method" value="EM"/>
    <property type="resolution" value="2.30 A"/>
    <property type="chains" value="f=1-57"/>
</dbReference>
<dbReference type="PDB" id="7R43">
    <property type="method" value="EM"/>
    <property type="resolution" value="2.40 A"/>
    <property type="chains" value="f=1-57"/>
</dbReference>
<dbReference type="PDB" id="7R44">
    <property type="method" value="EM"/>
    <property type="resolution" value="2.40 A"/>
    <property type="chains" value="f=1-57"/>
</dbReference>
<dbReference type="PDB" id="7R45">
    <property type="method" value="EM"/>
    <property type="resolution" value="2.40 A"/>
    <property type="chains" value="f=1-57"/>
</dbReference>
<dbReference type="PDB" id="7R46">
    <property type="method" value="EM"/>
    <property type="resolution" value="2.40 A"/>
    <property type="chains" value="f=1-57"/>
</dbReference>
<dbReference type="PDB" id="7R47">
    <property type="method" value="EM"/>
    <property type="resolution" value="2.30 A"/>
    <property type="chains" value="f=1-57"/>
</dbReference>
<dbReference type="PDB" id="7R48">
    <property type="method" value="EM"/>
    <property type="resolution" value="2.30 A"/>
    <property type="chains" value="f=1-57"/>
</dbReference>
<dbReference type="PDB" id="7R4C">
    <property type="method" value="EM"/>
    <property type="resolution" value="2.30 A"/>
    <property type="chains" value="f=1-57"/>
</dbReference>
<dbReference type="PDB" id="7R4D">
    <property type="method" value="EM"/>
    <property type="resolution" value="2.30 A"/>
    <property type="chains" value="f=1-57"/>
</dbReference>
<dbReference type="PDB" id="7R4F">
    <property type="method" value="EM"/>
    <property type="resolution" value="2.40 A"/>
    <property type="chains" value="f=1-57"/>
</dbReference>
<dbReference type="PDB" id="7R4G">
    <property type="method" value="EM"/>
    <property type="resolution" value="2.50 A"/>
    <property type="chains" value="f=1-57"/>
</dbReference>
<dbReference type="PDB" id="8Q0A">
    <property type="method" value="EM"/>
    <property type="resolution" value="3.10 A"/>
    <property type="chains" value="f=1-57"/>
</dbReference>
<dbReference type="PDB" id="8Q0F">
    <property type="method" value="EM"/>
    <property type="resolution" value="3.10 A"/>
    <property type="chains" value="f=1-57"/>
</dbReference>
<dbReference type="PDB" id="8Q0J">
    <property type="method" value="EM"/>
    <property type="resolution" value="3.80 A"/>
    <property type="chains" value="f=1-57"/>
</dbReference>
<dbReference type="PDB" id="8Q0M">
    <property type="method" value="EM"/>
    <property type="resolution" value="3.10 A"/>
    <property type="chains" value="f=1-57"/>
</dbReference>
<dbReference type="PDB" id="8Q0O">
    <property type="method" value="EM"/>
    <property type="resolution" value="3.10 A"/>
    <property type="chains" value="f=1-57"/>
</dbReference>
<dbReference type="PDB" id="8Q0Q">
    <property type="method" value="EM"/>
    <property type="resolution" value="3.60 A"/>
    <property type="chains" value="f=1-57"/>
</dbReference>
<dbReference type="PDB" id="8Q1P">
    <property type="method" value="EM"/>
    <property type="resolution" value="2.90 A"/>
    <property type="chains" value="f=1-57"/>
</dbReference>
<dbReference type="PDB" id="8Q1U">
    <property type="method" value="EM"/>
    <property type="resolution" value="3.30 A"/>
    <property type="chains" value="f=1-57"/>
</dbReference>
<dbReference type="PDB" id="8Q1Y">
    <property type="method" value="EM"/>
    <property type="resolution" value="2.60 A"/>
    <property type="chains" value="f=1-57"/>
</dbReference>
<dbReference type="PDB" id="8Q25">
    <property type="method" value="EM"/>
    <property type="resolution" value="2.80 A"/>
    <property type="chains" value="f=1-57"/>
</dbReference>
<dbReference type="PDB" id="8Q45">
    <property type="method" value="EM"/>
    <property type="resolution" value="2.70 A"/>
    <property type="chains" value="f=1-57"/>
</dbReference>
<dbReference type="PDB" id="8Q46">
    <property type="method" value="EM"/>
    <property type="resolution" value="2.60 A"/>
    <property type="chains" value="f=1-57"/>
</dbReference>
<dbReference type="PDB" id="8Q47">
    <property type="method" value="EM"/>
    <property type="resolution" value="2.90 A"/>
    <property type="chains" value="f=1-57"/>
</dbReference>
<dbReference type="PDB" id="8Q48">
    <property type="method" value="EM"/>
    <property type="resolution" value="2.50 A"/>
    <property type="chains" value="f=1-57"/>
</dbReference>
<dbReference type="PDB" id="8Q49">
    <property type="method" value="EM"/>
    <property type="resolution" value="2.60 A"/>
    <property type="chains" value="f=1-57"/>
</dbReference>
<dbReference type="PDB" id="8Q4A">
    <property type="method" value="EM"/>
    <property type="resolution" value="2.60 A"/>
    <property type="chains" value="f=1-57"/>
</dbReference>
<dbReference type="PDBsum" id="5LC5"/>
<dbReference type="PDBsum" id="5LDW"/>
<dbReference type="PDBsum" id="5LDX"/>
<dbReference type="PDBsum" id="5O31"/>
<dbReference type="PDBsum" id="7DGQ"/>
<dbReference type="PDBsum" id="7DGR"/>
<dbReference type="PDBsum" id="7DGS"/>
<dbReference type="PDBsum" id="7DGZ"/>
<dbReference type="PDBsum" id="7DH0"/>
<dbReference type="PDBsum" id="7DKF"/>
<dbReference type="PDBsum" id="7QSD"/>
<dbReference type="PDBsum" id="7QSK"/>
<dbReference type="PDBsum" id="7QSL"/>
<dbReference type="PDBsum" id="7QSM"/>
<dbReference type="PDBsum" id="7QSN"/>
<dbReference type="PDBsum" id="7QSO"/>
<dbReference type="PDBsum" id="7R41"/>
<dbReference type="PDBsum" id="7R42"/>
<dbReference type="PDBsum" id="7R43"/>
<dbReference type="PDBsum" id="7R44"/>
<dbReference type="PDBsum" id="7R45"/>
<dbReference type="PDBsum" id="7R46"/>
<dbReference type="PDBsum" id="7R47"/>
<dbReference type="PDBsum" id="7R48"/>
<dbReference type="PDBsum" id="7R4C"/>
<dbReference type="PDBsum" id="7R4D"/>
<dbReference type="PDBsum" id="7R4F"/>
<dbReference type="PDBsum" id="7R4G"/>
<dbReference type="PDBsum" id="8Q0A"/>
<dbReference type="PDBsum" id="8Q0F"/>
<dbReference type="PDBsum" id="8Q0J"/>
<dbReference type="PDBsum" id="8Q0M"/>
<dbReference type="PDBsum" id="8Q0O"/>
<dbReference type="PDBsum" id="8Q0Q"/>
<dbReference type="PDBsum" id="8Q1P"/>
<dbReference type="PDBsum" id="8Q1U"/>
<dbReference type="PDBsum" id="8Q1Y"/>
<dbReference type="PDBsum" id="8Q25"/>
<dbReference type="PDBsum" id="8Q45"/>
<dbReference type="PDBsum" id="8Q46"/>
<dbReference type="PDBsum" id="8Q47"/>
<dbReference type="PDBsum" id="8Q48"/>
<dbReference type="PDBsum" id="8Q49"/>
<dbReference type="PDBsum" id="8Q4A"/>
<dbReference type="EMDB" id="EMD-18051"/>
<dbReference type="EMDB" id="EMD-18052"/>
<dbReference type="EMDB" id="EMD-18054"/>
<dbReference type="EMDB" id="EMD-18055"/>
<dbReference type="EMDB" id="EMD-18057"/>
<dbReference type="EMDB" id="EMD-18059"/>
<dbReference type="EMDB" id="EMD-18066"/>
<dbReference type="EMDB" id="EMD-18067"/>
<dbReference type="EMDB" id="EMD-18068"/>
<dbReference type="EMDB" id="EMD-18069"/>
<dbReference type="EMDB" id="EMD-18138"/>
<dbReference type="EMDB" id="EMD-18139"/>
<dbReference type="EMDB" id="EMD-18140"/>
<dbReference type="EMDB" id="EMD-18141"/>
<dbReference type="EMDB" id="EMD-18142"/>
<dbReference type="EMDB" id="EMD-18143"/>
<dbReference type="EMDB" id="EMD-30673"/>
<dbReference type="EMDB" id="EMD-30676"/>
<dbReference type="EMDB" id="EMD-3731"/>
<dbReference type="EMDB" id="EMD-4032"/>
<dbReference type="EMDB" id="EMD-4040"/>
<dbReference type="EMDB" id="EMD-4041"/>
<dbReference type="SMR" id="Q02378"/>
<dbReference type="CORUM" id="Q02378"/>
<dbReference type="DIP" id="DIP-38823N"/>
<dbReference type="FunCoup" id="Q02378">
    <property type="interactions" value="234"/>
</dbReference>
<dbReference type="IntAct" id="Q02378">
    <property type="interactions" value="2"/>
</dbReference>
<dbReference type="STRING" id="9913.ENSBTAP00000020160"/>
<dbReference type="TCDB" id="3.D.1.6.1">
    <property type="family name" value="the h+ or na+-translocating nadh dehydrogenase (ndh) family"/>
</dbReference>
<dbReference type="PaxDb" id="9913-ENSBTAP00000020160"/>
<dbReference type="GeneID" id="327690"/>
<dbReference type="KEGG" id="bta:327690"/>
<dbReference type="CTD" id="4707"/>
<dbReference type="eggNOG" id="ENOG502S6X0">
    <property type="taxonomic scope" value="Eukaryota"/>
</dbReference>
<dbReference type="HOGENOM" id="CLU_208707_0_0_1"/>
<dbReference type="InParanoid" id="Q02378"/>
<dbReference type="OMA" id="HWVHTLV"/>
<dbReference type="OrthoDB" id="9923602at2759"/>
<dbReference type="Proteomes" id="UP000009136">
    <property type="component" value="Unplaced"/>
</dbReference>
<dbReference type="GO" id="GO:0005743">
    <property type="term" value="C:mitochondrial inner membrane"/>
    <property type="evidence" value="ECO:0007669"/>
    <property type="project" value="UniProtKB-SubCell"/>
</dbReference>
<dbReference type="GO" id="GO:0005739">
    <property type="term" value="C:mitochondrion"/>
    <property type="evidence" value="ECO:0000305"/>
    <property type="project" value="UniProtKB"/>
</dbReference>
<dbReference type="GO" id="GO:0045271">
    <property type="term" value="C:respiratory chain complex I"/>
    <property type="evidence" value="ECO:0000314"/>
    <property type="project" value="UniProtKB"/>
</dbReference>
<dbReference type="InterPro" id="IPR012575">
    <property type="entry name" value="NDUB1"/>
</dbReference>
<dbReference type="PANTHER" id="PTHR15222">
    <property type="entry name" value="NADH DEHYDROGENASE [UBIQUINONE] 1 BETA SUBCOMPLEX SUBUNIT 1"/>
    <property type="match status" value="1"/>
</dbReference>
<dbReference type="PANTHER" id="PTHR15222:SF2">
    <property type="entry name" value="NADH DEHYDROGENASE [UBIQUINONE] 1 BETA SUBCOMPLEX SUBUNIT 1"/>
    <property type="match status" value="1"/>
</dbReference>
<dbReference type="Pfam" id="PF08040">
    <property type="entry name" value="NADH_oxidored"/>
    <property type="match status" value="1"/>
</dbReference>
<name>NDUB1_BOVIN</name>
<proteinExistence type="evidence at protein level"/>
<protein>
    <recommendedName>
        <fullName>NADH dehydrogenase [ubiquinone] 1 beta subcomplex subunit 1</fullName>
    </recommendedName>
    <alternativeName>
        <fullName>Complex I-MNLL</fullName>
        <shortName>CI-MNLL</shortName>
    </alternativeName>
    <alternativeName>
        <fullName>NADH-ubiquinone oxidoreductase MNLL subunit</fullName>
    </alternativeName>
</protein>
<evidence type="ECO:0000250" key="1">
    <source>
        <dbReference type="UniProtKB" id="O75438"/>
    </source>
</evidence>
<evidence type="ECO:0000255" key="2"/>
<evidence type="ECO:0000269" key="3">
    <source>
    </source>
</evidence>
<evidence type="ECO:0000269" key="4">
    <source>
    </source>
</evidence>
<evidence type="ECO:0000269" key="5">
    <source>
    </source>
</evidence>
<evidence type="ECO:0000305" key="6"/>
<evidence type="ECO:0000305" key="7">
    <source>
    </source>
</evidence>
<evidence type="ECO:0000305" key="8">
    <source>
    </source>
</evidence>
<evidence type="ECO:0007829" key="9">
    <source>
        <dbReference type="PDB" id="7QSD"/>
    </source>
</evidence>
<evidence type="ECO:0007829" key="10">
    <source>
        <dbReference type="PDB" id="7QSM"/>
    </source>
</evidence>
<evidence type="ECO:0007829" key="11">
    <source>
        <dbReference type="PDB" id="8Q47"/>
    </source>
</evidence>
<evidence type="ECO:0007829" key="12">
    <source>
        <dbReference type="PDB" id="8Q48"/>
    </source>
</evidence>
<organism>
    <name type="scientific">Bos taurus</name>
    <name type="common">Bovine</name>
    <dbReference type="NCBI Taxonomy" id="9913"/>
    <lineage>
        <taxon>Eukaryota</taxon>
        <taxon>Metazoa</taxon>
        <taxon>Chordata</taxon>
        <taxon>Craniata</taxon>
        <taxon>Vertebrata</taxon>
        <taxon>Euteleostomi</taxon>
        <taxon>Mammalia</taxon>
        <taxon>Eutheria</taxon>
        <taxon>Laurasiatheria</taxon>
        <taxon>Artiodactyla</taxon>
        <taxon>Ruminantia</taxon>
        <taxon>Pecora</taxon>
        <taxon>Bovidae</taxon>
        <taxon>Bovinae</taxon>
        <taxon>Bos</taxon>
    </lineage>
</organism>
<accession>Q02378</accession>
<reference key="1">
    <citation type="journal article" date="1992" name="J. Mol. Biol.">
        <title>Sequences of 20 subunits of NADH:ubiquinone oxidoreductase from bovine heart mitochondria. Application of a novel strategy for sequencing proteins using the polymerase chain reaction.</title>
        <authorList>
            <person name="Walker J.E."/>
            <person name="Arizmendi J.M."/>
            <person name="Dupuis A."/>
            <person name="Fearnley I.M."/>
            <person name="Finel M."/>
            <person name="Medd S.M."/>
            <person name="Pilkington S.J."/>
            <person name="Runswick M.J."/>
            <person name="Skehel J.M."/>
        </authorList>
    </citation>
    <scope>NUCLEOTIDE SEQUENCE [MRNA]</scope>
    <scope>PROTEIN SEQUENCE OF 1-27; 29-30 AND 32-34</scope>
    <source>
        <tissue>Heart</tissue>
    </source>
</reference>
<reference key="2">
    <citation type="journal article" date="2000" name="Biochemistry">
        <title>Resolution of the membrane domain of bovine complex I into subcomplexes: implications for the structural organization of the enzyme.</title>
        <authorList>
            <person name="Sazanov L.A."/>
            <person name="Peak-Chew S.Y."/>
            <person name="Fearnley I.M."/>
            <person name="Walker J.E."/>
        </authorList>
    </citation>
    <scope>PARTIAL PROTEIN SEQUENCE</scope>
    <scope>SUBUNIT</scope>
    <scope>IDENTIFICATION IN COMPLEX I</scope>
    <scope>SUBCELLULAR LOCATION</scope>
</reference>
<reference key="3">
    <citation type="journal article" date="2008" name="Anal. Biochem.">
        <title>Subunit analysis of bovine heart complex I by reversed-phase high-performance liquid chromatography, electrospray ionization-tandem mass spectrometry, and matrix-assisted laser desorption/ionization-time-of-flight mass spectrometry.</title>
        <authorList>
            <person name="Lemma-Gray P."/>
            <person name="Valusova E."/>
            <person name="Carroll C.A."/>
            <person name="Weintraub S.T."/>
            <person name="Musatov A."/>
            <person name="Robinson N.C."/>
        </authorList>
    </citation>
    <scope>SUBUNIT</scope>
    <scope>IDENTIFICATION IN COMPLEX I</scope>
    <scope>SUBCELLULAR LOCATION</scope>
</reference>